<name>PCDB6_MOUSE</name>
<gene>
    <name evidence="7" type="primary">Pcdhb6</name>
</gene>
<feature type="signal peptide" evidence="4">
    <location>
        <begin position="1"/>
        <end position="28"/>
    </location>
</feature>
<feature type="chain" id="PRO_5008429367" description="Protocadherin beta-6" evidence="5">
    <location>
        <begin position="29"/>
        <end position="772"/>
    </location>
</feature>
<feature type="topological domain" description="Extracellular" evidence="6">
    <location>
        <begin position="31"/>
        <end position="690"/>
    </location>
</feature>
<feature type="transmembrane region" description="Helical" evidence="1">
    <location>
        <begin position="691"/>
        <end position="711"/>
    </location>
</feature>
<feature type="topological domain" description="Cytoplasmic" evidence="6">
    <location>
        <begin position="712"/>
        <end position="772"/>
    </location>
</feature>
<feature type="domain" description="Cadherin 1" evidence="2">
    <location>
        <begin position="31"/>
        <end position="133"/>
    </location>
</feature>
<feature type="domain" description="Cadherin 2" evidence="2">
    <location>
        <begin position="134"/>
        <end position="242"/>
    </location>
</feature>
<feature type="domain" description="Cadherin 3" evidence="2">
    <location>
        <begin position="243"/>
        <end position="346"/>
    </location>
</feature>
<feature type="domain" description="Cadherin 4" evidence="2">
    <location>
        <begin position="347"/>
        <end position="450"/>
    </location>
</feature>
<feature type="domain" description="Cadherin 5" evidence="2">
    <location>
        <begin position="451"/>
        <end position="560"/>
    </location>
</feature>
<feature type="domain" description="Cadherin 6" evidence="2">
    <location>
        <begin position="575"/>
        <end position="675"/>
    </location>
</feature>
<feature type="glycosylation site" description="N-linked (GlcNAc...) asparagine" evidence="4 8">
    <location>
        <position position="169"/>
    </location>
</feature>
<feature type="glycosylation site" description="O-linked (Man) serine" evidence="4 8">
    <location>
        <position position="223"/>
    </location>
</feature>
<feature type="glycosylation site" description="O-linked (Man) threonine" evidence="4 8">
    <location>
        <position position="225"/>
    </location>
</feature>
<feature type="glycosylation site" description="N-linked (GlcNAc...) asparagine" evidence="4 8">
    <location>
        <position position="417"/>
    </location>
</feature>
<feature type="glycosylation site" description="N-linked (GlcNAc...) asparagine" evidence="3">
    <location>
        <position position="566"/>
    </location>
</feature>
<feature type="disulfide bond" evidence="4 8">
    <location>
        <begin position="96"/>
        <end position="102"/>
    </location>
</feature>
<feature type="mutagenesis site" description="Changed homophilic interaction, being unable to interact with the wild-type protein but able to bind itself;when associated with D-69 and R-368." evidence="4">
    <original>H</original>
    <variation>V</variation>
    <location>
        <position position="67"/>
    </location>
</feature>
<feature type="mutagenesis site" description="Changed homophilic interaction, being unable to interact with the wild-type protein but able to bind itself;when associated with V-67 and R-368." evidence="4">
    <original>R</original>
    <variation>D</variation>
    <location>
        <position position="69"/>
    </location>
</feature>
<feature type="mutagenesis site" description="No effect on homophilic interaction. Changed homophilic interaction, being unable to interact with the wild-type protein but able to bind itself; when associated with R-323." evidence="4">
    <original>K</original>
    <variation>E</variation>
    <location>
        <position position="141"/>
    </location>
</feature>
<feature type="mutagenesis site" description="Changed homophilic interaction; when associated with F-326." evidence="4">
    <original>Q</original>
    <variation>P</variation>
    <location>
        <position position="143"/>
    </location>
</feature>
<feature type="mutagenesis site" description="Changed homophilic interaction, being unable to interact with the wild-type protein but able to bind itself." evidence="4">
    <original>S</original>
    <variation>I</variation>
    <location>
        <position position="145"/>
    </location>
</feature>
<feature type="mutagenesis site" description="No effect on homophilic interaction. Changed homophilic interaction, being unable to interact with the wild-type protein but able to bind itself; when associated with K-317." evidence="4">
    <original>R</original>
    <variation>N</variation>
    <location>
        <position position="185"/>
    </location>
</feature>
<feature type="mutagenesis site" description="Changed homophilic interaction, being unable to interact with the wild-type protein but able to bind itself; when associated with N-185." evidence="4">
    <original>E</original>
    <variation>K</variation>
    <location>
        <position position="317"/>
    </location>
</feature>
<feature type="mutagenesis site" description="Changed homophilic interaction, being unable to interact with the wild-type protein but able to bind itself; when associated with E-141." evidence="4">
    <original>S</original>
    <variation>R</variation>
    <location>
        <position position="323"/>
    </location>
</feature>
<feature type="mutagenesis site" description="No effect on homophilic interaction. Changed homophilic interaction; when associated with P-143." evidence="4">
    <original>L</original>
    <variation>F</variation>
    <location>
        <position position="326"/>
    </location>
</feature>
<feature type="mutagenesis site" description="No effect on homophilic interaction. Changed homophilic interaction, being unable to interact with the wild-type protein but able to bind itself; when associated with V-67 and D-69." evidence="4">
    <original>S</original>
    <variation>R</variation>
    <location>
        <position position="368"/>
    </location>
</feature>
<feature type="strand" evidence="9">
    <location>
        <begin position="32"/>
        <end position="36"/>
    </location>
</feature>
<feature type="strand" evidence="9">
    <location>
        <begin position="44"/>
        <end position="47"/>
    </location>
</feature>
<feature type="helix" evidence="9">
    <location>
        <begin position="48"/>
        <end position="52"/>
    </location>
</feature>
<feature type="helix" evidence="9">
    <location>
        <begin position="56"/>
        <end position="61"/>
    </location>
</feature>
<feature type="strand" evidence="9">
    <location>
        <begin position="65"/>
        <end position="71"/>
    </location>
</feature>
<feature type="strand" evidence="9">
    <location>
        <begin position="75"/>
        <end position="78"/>
    </location>
</feature>
<feature type="turn" evidence="9">
    <location>
        <begin position="79"/>
        <end position="82"/>
    </location>
</feature>
<feature type="strand" evidence="9">
    <location>
        <begin position="83"/>
        <end position="88"/>
    </location>
</feature>
<feature type="helix" evidence="9">
    <location>
        <begin position="92"/>
        <end position="95"/>
    </location>
</feature>
<feature type="turn" evidence="9">
    <location>
        <begin position="96"/>
        <end position="98"/>
    </location>
</feature>
<feature type="strand" evidence="9">
    <location>
        <begin position="100"/>
        <end position="110"/>
    </location>
</feature>
<feature type="turn" evidence="9">
    <location>
        <begin position="111"/>
        <end position="114"/>
    </location>
</feature>
<feature type="strand" evidence="9">
    <location>
        <begin position="115"/>
        <end position="124"/>
    </location>
</feature>
<feature type="strand" evidence="9">
    <location>
        <begin position="134"/>
        <end position="143"/>
    </location>
</feature>
<feature type="strand" evidence="9">
    <location>
        <begin position="151"/>
        <end position="153"/>
    </location>
</feature>
<feature type="helix" evidence="9">
    <location>
        <begin position="163"/>
        <end position="165"/>
    </location>
</feature>
<feature type="strand" evidence="9">
    <location>
        <begin position="166"/>
        <end position="172"/>
    </location>
</feature>
<feature type="strand" evidence="9">
    <location>
        <begin position="176"/>
        <end position="183"/>
    </location>
</feature>
<feature type="strand" evidence="9">
    <location>
        <begin position="186"/>
        <end position="189"/>
    </location>
</feature>
<feature type="strand" evidence="9">
    <location>
        <begin position="191"/>
        <end position="196"/>
    </location>
</feature>
<feature type="turn" evidence="9">
    <location>
        <begin position="202"/>
        <end position="204"/>
    </location>
</feature>
<feature type="strand" evidence="9">
    <location>
        <begin position="206"/>
        <end position="220"/>
    </location>
</feature>
<feature type="strand" evidence="9">
    <location>
        <begin position="225"/>
        <end position="233"/>
    </location>
</feature>
<feature type="strand" evidence="9">
    <location>
        <begin position="241"/>
        <end position="243"/>
    </location>
</feature>
<feature type="strand" evidence="9">
    <location>
        <begin position="245"/>
        <end position="252"/>
    </location>
</feature>
<feature type="strand" evidence="9">
    <location>
        <begin position="260"/>
        <end position="263"/>
    </location>
</feature>
<feature type="helix" evidence="9">
    <location>
        <begin position="272"/>
        <end position="274"/>
    </location>
</feature>
<feature type="strand" evidence="9">
    <location>
        <begin position="277"/>
        <end position="283"/>
    </location>
</feature>
<feature type="strand" evidence="9">
    <location>
        <begin position="285"/>
        <end position="287"/>
    </location>
</feature>
<feature type="strand" evidence="9">
    <location>
        <begin position="290"/>
        <end position="293"/>
    </location>
</feature>
<feature type="turn" evidence="9">
    <location>
        <begin position="295"/>
        <end position="297"/>
    </location>
</feature>
<feature type="strand" evidence="9">
    <location>
        <begin position="299"/>
        <end position="304"/>
    </location>
</feature>
<feature type="turn" evidence="9">
    <location>
        <begin position="308"/>
        <end position="310"/>
    </location>
</feature>
<feature type="strand" evidence="9">
    <location>
        <begin position="312"/>
        <end position="325"/>
    </location>
</feature>
<feature type="strand" evidence="9">
    <location>
        <begin position="327"/>
        <end position="337"/>
    </location>
</feature>
<feature type="strand" evidence="9">
    <location>
        <begin position="345"/>
        <end position="351"/>
    </location>
</feature>
<feature type="strand" evidence="9">
    <location>
        <begin position="353"/>
        <end position="358"/>
    </location>
</feature>
<feature type="strand" evidence="9">
    <location>
        <begin position="363"/>
        <end position="370"/>
    </location>
</feature>
<feature type="helix" evidence="9">
    <location>
        <begin position="375"/>
        <end position="377"/>
    </location>
</feature>
<feature type="strand" evidence="9">
    <location>
        <begin position="380"/>
        <end position="383"/>
    </location>
</feature>
<feature type="strand" evidence="9">
    <location>
        <begin position="388"/>
        <end position="396"/>
    </location>
</feature>
<feature type="strand" evidence="9">
    <location>
        <begin position="399"/>
        <end position="406"/>
    </location>
</feature>
<feature type="turn" evidence="9">
    <location>
        <begin position="410"/>
        <end position="412"/>
    </location>
</feature>
<feature type="strand" evidence="9">
    <location>
        <begin position="416"/>
        <end position="428"/>
    </location>
</feature>
<feature type="strand" evidence="9">
    <location>
        <begin position="431"/>
        <end position="441"/>
    </location>
</feature>
<sequence length="772" mass="84280">METTLAKTPEKRQVVFLAILLLLWEAGSEAIRYSIPEETESGYLVAHLAKDLGFRVGELATRRARIHHRGNKELLQLDVETGNLLLKEKPDREALCGATEPCVLHFQIILENPVQFFQTELQLTDINDHSPEFPDTEMLLKIQESTQPATVFLLKAAQDSDIGSNAVQNYTVSPNLHFHVVTLSRSDGRKYPELVLDRALDREEQPELTLILTALDGGAPPKSGTTTVRIEVVDINDNAPEFVQSLYSVEVPENSPLDALVVTVSARDLDAGIHGNVAYSLFQGGGGPQPFVIDEITGEIRLKGALDFEATSYYTMEIVATDSGGLSGKCTVAIQVLDVNDNAPKLTISSLTSSIPENAPEAVVAVFSVSDPDSGDNGRMVCSIQNELPFLLKPTFENYYTLAAEGPLDREIREEYNITIIVSDLGTPRLTTQHTITVQVVDINDNAPAFTQTSYTMFVHENNNPALHIGTISATDSDSGSNAHITYSLLPPHDLQLSLASLVSINADNGQLFALRAMDYEALQAFEFHVVARDGGSPALSSQALVRVVVLDDNDNAPFILYPMQNASAPCTELLPRAAEPGYLVTKVVAVDSDSGQNAWLSFQLLKATEPGLFSVWAHNGEVRTTRLLSERDVPKHRLLLLVKDNGEPPRSASVTLHVLLVDGFSQPYLPLPEVQHDSSQDEDMLTLYLVIALASVSSLFLLSVLLFVGVRLCRRVREASLGACSVPEGHFSGHLVDVSGMGTLSQSYQYEVCLSGDSGTTDFKFLNHYSQ</sequence>
<organism>
    <name type="scientific">Mus musculus</name>
    <name type="common">Mouse</name>
    <dbReference type="NCBI Taxonomy" id="10090"/>
    <lineage>
        <taxon>Eukaryota</taxon>
        <taxon>Metazoa</taxon>
        <taxon>Chordata</taxon>
        <taxon>Craniata</taxon>
        <taxon>Vertebrata</taxon>
        <taxon>Euteleostomi</taxon>
        <taxon>Mammalia</taxon>
        <taxon>Eutheria</taxon>
        <taxon>Euarchontoglires</taxon>
        <taxon>Glires</taxon>
        <taxon>Rodentia</taxon>
        <taxon>Myomorpha</taxon>
        <taxon>Muroidea</taxon>
        <taxon>Muridae</taxon>
        <taxon>Murinae</taxon>
        <taxon>Mus</taxon>
        <taxon>Mus</taxon>
    </lineage>
</organism>
<comment type="function">
    <text evidence="4">Calcium-dependent cell-adhesion protein involved in cells self-recognition and non-self discrimination (PubMed:27161523). Thereby, it is involved in the establishment and maintenance of specific neuronal connections in the brain (PubMed:27161523).</text>
</comment>
<comment type="subunit">
    <text evidence="4">Forms homodimers in trans (molecules expressed by two different cells). Forms promiscuous heterodimers in cis (at the plasma membrane of the same cell) with other protocadherins.</text>
</comment>
<comment type="subcellular location">
    <subcellularLocation>
        <location evidence="4">Cell membrane</location>
        <topology evidence="4">Single-pass type I membrane protein</topology>
    </subcellularLocation>
</comment>
<comment type="domain">
    <text evidence="4 8">Cadherin 1 to cadherin 4 domains mediate homophilic trans-interaction, the interaction with an identical protocadherin expressed by a neighboring cell (PubMed:27161523). This is a head-to-tail interaction, the cadherin 1 domain interacting with the cadherin 4 domain and the cadherin 2 domain interacting the cadherin 3 domain of the other protocadherin (PubMed:27161523). The cadherin 6 domain mediates promiscuous interactions with protocadherins on the same cell membrane (PubMed:27161523). Each cadherin domain binds three calcium ions (PubMed:27161523).</text>
</comment>
<accession>Q91XZ4</accession>
<dbReference type="EMBL" id="AY013788">
    <property type="protein sequence ID" value="AAK26077.1"/>
    <property type="molecule type" value="mRNA"/>
</dbReference>
<dbReference type="EMBL" id="AC020974">
    <property type="status" value="NOT_ANNOTATED_CDS"/>
    <property type="molecule type" value="Genomic_DNA"/>
</dbReference>
<dbReference type="CCDS" id="CCDS29174.1"/>
<dbReference type="RefSeq" id="NP_444361.1">
    <property type="nucleotide sequence ID" value="NM_053131.2"/>
</dbReference>
<dbReference type="PDB" id="5DZX">
    <property type="method" value="X-ray"/>
    <property type="resolution" value="2.88 A"/>
    <property type="chains" value="A/B=29-445"/>
</dbReference>
<dbReference type="PDBsum" id="5DZX"/>
<dbReference type="SMR" id="Q91XZ4"/>
<dbReference type="FunCoup" id="Q91XZ4">
    <property type="interactions" value="161"/>
</dbReference>
<dbReference type="STRING" id="10090.ENSMUSP00000058592"/>
<dbReference type="GlyCosmos" id="Q91XZ4">
    <property type="glycosylation" value="5 sites, No reported glycans"/>
</dbReference>
<dbReference type="GlyGen" id="Q91XZ4">
    <property type="glycosylation" value="5 sites, 1 N-linked glycan (1 site)"/>
</dbReference>
<dbReference type="iPTMnet" id="Q91XZ4"/>
<dbReference type="PhosphoSitePlus" id="Q91XZ4"/>
<dbReference type="PaxDb" id="10090-ENSMUSP00000058592"/>
<dbReference type="ProteomicsDB" id="288111"/>
<dbReference type="DNASU" id="93877"/>
<dbReference type="Ensembl" id="ENSMUST00000061717.4">
    <property type="protein sequence ID" value="ENSMUSP00000058592.3"/>
    <property type="gene ID" value="ENSMUSG00000051678.5"/>
</dbReference>
<dbReference type="GeneID" id="93877"/>
<dbReference type="KEGG" id="mmu:93877"/>
<dbReference type="UCSC" id="uc008epr.1">
    <property type="organism name" value="mouse"/>
</dbReference>
<dbReference type="AGR" id="MGI:2136740"/>
<dbReference type="CTD" id="56130"/>
<dbReference type="MGI" id="MGI:2136740">
    <property type="gene designation" value="Pcdhb6"/>
</dbReference>
<dbReference type="VEuPathDB" id="HostDB:ENSMUSG00000051678"/>
<dbReference type="eggNOG" id="KOG3594">
    <property type="taxonomic scope" value="Eukaryota"/>
</dbReference>
<dbReference type="GeneTree" id="ENSGT00940000157793"/>
<dbReference type="HOGENOM" id="CLU_006480_3_0_1"/>
<dbReference type="InParanoid" id="Q91XZ4"/>
<dbReference type="OMA" id="XIDINDH"/>
<dbReference type="OrthoDB" id="6252479at2759"/>
<dbReference type="PhylomeDB" id="Q91XZ4"/>
<dbReference type="TreeFam" id="TF332299"/>
<dbReference type="BioGRID-ORCS" id="93877">
    <property type="hits" value="1 hit in 76 CRISPR screens"/>
</dbReference>
<dbReference type="EvolutionaryTrace" id="Q91XZ4"/>
<dbReference type="PRO" id="PR:Q91XZ4"/>
<dbReference type="Proteomes" id="UP000000589">
    <property type="component" value="Chromosome 18"/>
</dbReference>
<dbReference type="RNAct" id="Q91XZ4">
    <property type="molecule type" value="protein"/>
</dbReference>
<dbReference type="Bgee" id="ENSMUSG00000051678">
    <property type="expression patterns" value="Expressed in cerebellar cortex and 29 other cell types or tissues"/>
</dbReference>
<dbReference type="ExpressionAtlas" id="Q91XZ4">
    <property type="expression patterns" value="baseline and differential"/>
</dbReference>
<dbReference type="GO" id="GO:0005886">
    <property type="term" value="C:plasma membrane"/>
    <property type="evidence" value="ECO:0000314"/>
    <property type="project" value="UniProtKB"/>
</dbReference>
<dbReference type="GO" id="GO:0005509">
    <property type="term" value="F:calcium ion binding"/>
    <property type="evidence" value="ECO:0000314"/>
    <property type="project" value="UniProtKB"/>
</dbReference>
<dbReference type="GO" id="GO:0042802">
    <property type="term" value="F:identical protein binding"/>
    <property type="evidence" value="ECO:0000314"/>
    <property type="project" value="UniProtKB"/>
</dbReference>
<dbReference type="GO" id="GO:0009988">
    <property type="term" value="P:cell-cell recognition"/>
    <property type="evidence" value="ECO:0000314"/>
    <property type="project" value="UniProtKB"/>
</dbReference>
<dbReference type="GO" id="GO:0007156">
    <property type="term" value="P:homophilic cell adhesion via plasma membrane adhesion molecules"/>
    <property type="evidence" value="ECO:0000314"/>
    <property type="project" value="UniProtKB"/>
</dbReference>
<dbReference type="CDD" id="cd11304">
    <property type="entry name" value="Cadherin_repeat"/>
    <property type="match status" value="5"/>
</dbReference>
<dbReference type="FunFam" id="2.60.40.60:FF:000001">
    <property type="entry name" value="Protocadherin alpha 2"/>
    <property type="match status" value="1"/>
</dbReference>
<dbReference type="FunFam" id="2.60.40.60:FF:000002">
    <property type="entry name" value="Protocadherin alpha 2"/>
    <property type="match status" value="1"/>
</dbReference>
<dbReference type="FunFam" id="2.60.40.60:FF:000006">
    <property type="entry name" value="Protocadherin alpha 2"/>
    <property type="match status" value="1"/>
</dbReference>
<dbReference type="FunFam" id="2.60.40.60:FF:000046">
    <property type="entry name" value="Protocadherin beta 5"/>
    <property type="match status" value="1"/>
</dbReference>
<dbReference type="FunFam" id="2.60.40.60:FF:000309">
    <property type="entry name" value="Protocadherin beta-8"/>
    <property type="match status" value="1"/>
</dbReference>
<dbReference type="FunFam" id="2.60.40.60:FF:000018">
    <property type="entry name" value="Protocadherin gamma c3"/>
    <property type="match status" value="1"/>
</dbReference>
<dbReference type="Gene3D" id="2.60.40.60">
    <property type="entry name" value="Cadherins"/>
    <property type="match status" value="6"/>
</dbReference>
<dbReference type="InterPro" id="IPR002126">
    <property type="entry name" value="Cadherin-like_dom"/>
</dbReference>
<dbReference type="InterPro" id="IPR015919">
    <property type="entry name" value="Cadherin-like_sf"/>
</dbReference>
<dbReference type="InterPro" id="IPR032455">
    <property type="entry name" value="Cadherin_C"/>
</dbReference>
<dbReference type="InterPro" id="IPR020894">
    <property type="entry name" value="Cadherin_CS"/>
</dbReference>
<dbReference type="InterPro" id="IPR013164">
    <property type="entry name" value="Cadherin_N"/>
</dbReference>
<dbReference type="InterPro" id="IPR050174">
    <property type="entry name" value="Protocadherin/Cadherin-CA"/>
</dbReference>
<dbReference type="PANTHER" id="PTHR24028">
    <property type="entry name" value="CADHERIN-87A"/>
    <property type="match status" value="1"/>
</dbReference>
<dbReference type="PANTHER" id="PTHR24028:SF308">
    <property type="entry name" value="PROTOCADHERIN BETA 4-RELATED"/>
    <property type="match status" value="1"/>
</dbReference>
<dbReference type="Pfam" id="PF00028">
    <property type="entry name" value="Cadherin"/>
    <property type="match status" value="5"/>
</dbReference>
<dbReference type="Pfam" id="PF08266">
    <property type="entry name" value="Cadherin_2"/>
    <property type="match status" value="1"/>
</dbReference>
<dbReference type="Pfam" id="PF16492">
    <property type="entry name" value="Cadherin_C_2"/>
    <property type="match status" value="1"/>
</dbReference>
<dbReference type="PRINTS" id="PR00205">
    <property type="entry name" value="CADHERIN"/>
</dbReference>
<dbReference type="SMART" id="SM00112">
    <property type="entry name" value="CA"/>
    <property type="match status" value="5"/>
</dbReference>
<dbReference type="SUPFAM" id="SSF49313">
    <property type="entry name" value="Cadherin-like"/>
    <property type="match status" value="6"/>
</dbReference>
<dbReference type="PROSITE" id="PS00232">
    <property type="entry name" value="CADHERIN_1"/>
    <property type="match status" value="5"/>
</dbReference>
<dbReference type="PROSITE" id="PS50268">
    <property type="entry name" value="CADHERIN_2"/>
    <property type="match status" value="5"/>
</dbReference>
<protein>
    <recommendedName>
        <fullName evidence="5">Protocadherin beta-6</fullName>
        <shortName evidence="5">PCDH-beta-6</shortName>
    </recommendedName>
</protein>
<keyword id="KW-0002">3D-structure</keyword>
<keyword id="KW-0106">Calcium</keyword>
<keyword id="KW-0130">Cell adhesion</keyword>
<keyword id="KW-1003">Cell membrane</keyword>
<keyword id="KW-0903">Direct protein sequencing</keyword>
<keyword id="KW-1015">Disulfide bond</keyword>
<keyword id="KW-0325">Glycoprotein</keyword>
<keyword id="KW-0472">Membrane</keyword>
<keyword id="KW-0479">Metal-binding</keyword>
<keyword id="KW-1185">Reference proteome</keyword>
<keyword id="KW-0677">Repeat</keyword>
<keyword id="KW-0732">Signal</keyword>
<keyword id="KW-0812">Transmembrane</keyword>
<keyword id="KW-1133">Transmembrane helix</keyword>
<proteinExistence type="evidence at protein level"/>
<evidence type="ECO:0000255" key="1"/>
<evidence type="ECO:0000255" key="2">
    <source>
        <dbReference type="PROSITE-ProRule" id="PRU00043"/>
    </source>
</evidence>
<evidence type="ECO:0000255" key="3">
    <source>
        <dbReference type="PROSITE-ProRule" id="PRU00498"/>
    </source>
</evidence>
<evidence type="ECO:0000269" key="4">
    <source>
    </source>
</evidence>
<evidence type="ECO:0000305" key="5"/>
<evidence type="ECO:0000305" key="6">
    <source>
    </source>
</evidence>
<evidence type="ECO:0000312" key="7">
    <source>
        <dbReference type="MGI" id="MGI:2136740"/>
    </source>
</evidence>
<evidence type="ECO:0000312" key="8">
    <source>
        <dbReference type="PDB" id="5DZX"/>
    </source>
</evidence>
<evidence type="ECO:0007829" key="9">
    <source>
        <dbReference type="PDB" id="5DZX"/>
    </source>
</evidence>
<reference key="1">
    <citation type="journal article" date="2001" name="Genome Res.">
        <title>Comparative DNA sequence analysis of mouse and human protocadherin gene clusters.</title>
        <authorList>
            <person name="Wu Q."/>
            <person name="Zhang T."/>
            <person name="Cheng J.-F."/>
            <person name="Kim Y."/>
            <person name="Grimwood J."/>
            <person name="Schmutz J."/>
            <person name="Dickson M."/>
            <person name="Noonan J.P."/>
            <person name="Zhang M.Q."/>
            <person name="Myers R.M."/>
            <person name="Maniatis T."/>
        </authorList>
    </citation>
    <scope>NUCLEOTIDE SEQUENCE [MRNA]</scope>
    <source>
        <tissue>Brain</tissue>
    </source>
</reference>
<reference key="2">
    <citation type="journal article" date="2009" name="PLoS Biol.">
        <title>Lineage-specific biology revealed by a finished genome assembly of the mouse.</title>
        <authorList>
            <person name="Church D.M."/>
            <person name="Goodstadt L."/>
            <person name="Hillier L.W."/>
            <person name="Zody M.C."/>
            <person name="Goldstein S."/>
            <person name="She X."/>
            <person name="Bult C.J."/>
            <person name="Agarwala R."/>
            <person name="Cherry J.L."/>
            <person name="DiCuccio M."/>
            <person name="Hlavina W."/>
            <person name="Kapustin Y."/>
            <person name="Meric P."/>
            <person name="Maglott D."/>
            <person name="Birtle Z."/>
            <person name="Marques A.C."/>
            <person name="Graves T."/>
            <person name="Zhou S."/>
            <person name="Teague B."/>
            <person name="Potamousis K."/>
            <person name="Churas C."/>
            <person name="Place M."/>
            <person name="Herschleb J."/>
            <person name="Runnheim R."/>
            <person name="Forrest D."/>
            <person name="Amos-Landgraf J."/>
            <person name="Schwartz D.C."/>
            <person name="Cheng Z."/>
            <person name="Lindblad-Toh K."/>
            <person name="Eichler E.E."/>
            <person name="Ponting C.P."/>
        </authorList>
    </citation>
    <scope>NUCLEOTIDE SEQUENCE [LARGE SCALE GENOMIC DNA]</scope>
    <source>
        <strain>C57BL/6J</strain>
    </source>
</reference>
<reference key="3">
    <citation type="journal article" date="2016" name="Neuron">
        <title>Structural basis of diverse homophilic recognition by clustered alpha- and beta-protocadherins.</title>
        <authorList>
            <person name="Goodman K.M."/>
            <person name="Rubinstein R."/>
            <person name="Thu C.A."/>
            <person name="Bahna F."/>
            <person name="Mannepalli S."/>
            <person name="Ahlsen G."/>
            <person name="Rittenhouse C."/>
            <person name="Maniatis T."/>
            <person name="Honig B."/>
            <person name="Shapiro L."/>
        </authorList>
    </citation>
    <scope>X-RAY CRYSTALLOGRAPHY (2.88 ANGSTROMS) OF 29-445 OF HOMODIMER IN COMPLEX WITH CALCIUM</scope>
    <scope>PROTEIN SEQUENCE OF 29-35</scope>
    <scope>FUNCTION</scope>
    <scope>SUBUNIT</scope>
    <scope>SUBCELLULAR LOCATION</scope>
    <scope>TOPOLOGY</scope>
    <scope>DOMAIN</scope>
    <scope>DISULFIDE BONDS</scope>
    <scope>GLYCOSYLATION AT ASN-169; SER-223; THR-225 AND ASN-417</scope>
    <scope>CALCIUM-BINDING</scope>
    <scope>MUTAGENESIS OF HIS-67; ARG-69; LYS-141; GLN-143; SER-145; ARG-185; GLU-317; SER-323; LEU-326 AND SER-368</scope>
</reference>